<proteinExistence type="inferred from homology"/>
<keyword id="KW-0413">Isomerase</keyword>
<keyword id="KW-1185">Reference proteome</keyword>
<keyword id="KW-0819">tRNA processing</keyword>
<reference key="1">
    <citation type="book" date="2006" name="Gram positive pathogens, 2nd edition">
        <title>The Staphylococcus aureus NCTC 8325 genome.</title>
        <editorList>
            <person name="Fischetti V."/>
            <person name="Novick R."/>
            <person name="Ferretti J."/>
            <person name="Portnoy D."/>
            <person name="Rood J."/>
        </editorList>
        <authorList>
            <person name="Gillaspy A.F."/>
            <person name="Worrell V."/>
            <person name="Orvis J."/>
            <person name="Roe B.A."/>
            <person name="Dyer D.W."/>
            <person name="Iandolo J.J."/>
        </authorList>
    </citation>
    <scope>NUCLEOTIDE SEQUENCE [LARGE SCALE GENOMIC DNA]</scope>
    <source>
        <strain>NCTC 8325 / PS 47</strain>
    </source>
</reference>
<comment type="function">
    <text evidence="1">Responsible for synthesis of pseudouridine from uracil-55 in the psi GC loop of transfer RNAs.</text>
</comment>
<comment type="catalytic activity">
    <reaction evidence="1">
        <text>uridine(55) in tRNA = pseudouridine(55) in tRNA</text>
        <dbReference type="Rhea" id="RHEA:42532"/>
        <dbReference type="Rhea" id="RHEA-COMP:10101"/>
        <dbReference type="Rhea" id="RHEA-COMP:10102"/>
        <dbReference type="ChEBI" id="CHEBI:65314"/>
        <dbReference type="ChEBI" id="CHEBI:65315"/>
        <dbReference type="EC" id="5.4.99.25"/>
    </reaction>
</comment>
<comment type="similarity">
    <text evidence="1">Belongs to the pseudouridine synthase TruB family. Type 1 subfamily.</text>
</comment>
<gene>
    <name evidence="1" type="primary">truB</name>
    <name type="ordered locus">SAOUHSC_01248</name>
</gene>
<sequence>MYNGILPVYKERGLTSHDVVFKLRKILKTKKIGHTGTLDPEVAGVLPVCIGNATRVSDYVMDMGKAYEATVSIGRSTTTEDQTGDTLETKGVHSADFNKDDIDRLLESFKGIIEQIPPMYSSVKVNGKKLYEYARNNETVERPKRKVNIKDIGRISELDFKENECHFKIRVICGKGTYIRTLATDIGVKLGFPAHMSKLTRIESGGFVLKDSLTLEQIKELHEQDSLQNKLFPLEYGLKGLPSIKIKDSHIKKRILNGQKFNKNEFDNKIKDQIVFIDDDSEKVLAIYMVHPTKESEIKPKKVFN</sequence>
<dbReference type="EC" id="5.4.99.25" evidence="1"/>
<dbReference type="EMBL" id="CP000253">
    <property type="protein sequence ID" value="ABD30349.1"/>
    <property type="molecule type" value="Genomic_DNA"/>
</dbReference>
<dbReference type="RefSeq" id="WP_000282305.1">
    <property type="nucleotide sequence ID" value="NZ_LS483365.1"/>
</dbReference>
<dbReference type="RefSeq" id="YP_499781.1">
    <property type="nucleotide sequence ID" value="NC_007795.1"/>
</dbReference>
<dbReference type="SMR" id="Q2G2Q3"/>
<dbReference type="STRING" id="93061.SAOUHSC_01248"/>
<dbReference type="PaxDb" id="1280-SAXN108_1275"/>
<dbReference type="GeneID" id="3919979"/>
<dbReference type="KEGG" id="sao:SAOUHSC_01248"/>
<dbReference type="PATRIC" id="fig|93061.5.peg.1142"/>
<dbReference type="eggNOG" id="COG0130">
    <property type="taxonomic scope" value="Bacteria"/>
</dbReference>
<dbReference type="HOGENOM" id="CLU_032087_0_1_9"/>
<dbReference type="OrthoDB" id="9802309at2"/>
<dbReference type="PRO" id="PR:Q2G2Q3"/>
<dbReference type="Proteomes" id="UP000008816">
    <property type="component" value="Chromosome"/>
</dbReference>
<dbReference type="GO" id="GO:0009982">
    <property type="term" value="F:pseudouridine synthase activity"/>
    <property type="evidence" value="ECO:0000318"/>
    <property type="project" value="GO_Central"/>
</dbReference>
<dbReference type="GO" id="GO:0003723">
    <property type="term" value="F:RNA binding"/>
    <property type="evidence" value="ECO:0007669"/>
    <property type="project" value="InterPro"/>
</dbReference>
<dbReference type="GO" id="GO:0160148">
    <property type="term" value="F:tRNA pseudouridine(55) synthase activity"/>
    <property type="evidence" value="ECO:0007669"/>
    <property type="project" value="UniProtKB-EC"/>
</dbReference>
<dbReference type="GO" id="GO:1990481">
    <property type="term" value="P:mRNA pseudouridine synthesis"/>
    <property type="evidence" value="ECO:0000318"/>
    <property type="project" value="GO_Central"/>
</dbReference>
<dbReference type="GO" id="GO:0006400">
    <property type="term" value="P:tRNA modification"/>
    <property type="evidence" value="ECO:0000318"/>
    <property type="project" value="GO_Central"/>
</dbReference>
<dbReference type="GO" id="GO:0031119">
    <property type="term" value="P:tRNA pseudouridine synthesis"/>
    <property type="evidence" value="ECO:0007669"/>
    <property type="project" value="UniProtKB-UniRule"/>
</dbReference>
<dbReference type="CDD" id="cd02573">
    <property type="entry name" value="PseudoU_synth_EcTruB"/>
    <property type="match status" value="1"/>
</dbReference>
<dbReference type="FunFam" id="3.30.2350.10:FF:000011">
    <property type="entry name" value="tRNA pseudouridine synthase B"/>
    <property type="match status" value="1"/>
</dbReference>
<dbReference type="Gene3D" id="3.30.2350.10">
    <property type="entry name" value="Pseudouridine synthase"/>
    <property type="match status" value="1"/>
</dbReference>
<dbReference type="HAMAP" id="MF_01080">
    <property type="entry name" value="TruB_bact"/>
    <property type="match status" value="1"/>
</dbReference>
<dbReference type="InterPro" id="IPR020103">
    <property type="entry name" value="PsdUridine_synth_cat_dom_sf"/>
</dbReference>
<dbReference type="InterPro" id="IPR002501">
    <property type="entry name" value="PsdUridine_synth_N"/>
</dbReference>
<dbReference type="InterPro" id="IPR014780">
    <property type="entry name" value="tRNA_psdUridine_synth_TruB"/>
</dbReference>
<dbReference type="InterPro" id="IPR032819">
    <property type="entry name" value="TruB_C"/>
</dbReference>
<dbReference type="NCBIfam" id="TIGR00431">
    <property type="entry name" value="TruB"/>
    <property type="match status" value="1"/>
</dbReference>
<dbReference type="PANTHER" id="PTHR13767:SF2">
    <property type="entry name" value="PSEUDOURIDYLATE SYNTHASE TRUB1"/>
    <property type="match status" value="1"/>
</dbReference>
<dbReference type="PANTHER" id="PTHR13767">
    <property type="entry name" value="TRNA-PSEUDOURIDINE SYNTHASE"/>
    <property type="match status" value="1"/>
</dbReference>
<dbReference type="Pfam" id="PF16198">
    <property type="entry name" value="TruB_C_2"/>
    <property type="match status" value="1"/>
</dbReference>
<dbReference type="Pfam" id="PF01509">
    <property type="entry name" value="TruB_N"/>
    <property type="match status" value="1"/>
</dbReference>
<dbReference type="SUPFAM" id="SSF55120">
    <property type="entry name" value="Pseudouridine synthase"/>
    <property type="match status" value="1"/>
</dbReference>
<evidence type="ECO:0000255" key="1">
    <source>
        <dbReference type="HAMAP-Rule" id="MF_01080"/>
    </source>
</evidence>
<organism>
    <name type="scientific">Staphylococcus aureus (strain NCTC 8325 / PS 47)</name>
    <dbReference type="NCBI Taxonomy" id="93061"/>
    <lineage>
        <taxon>Bacteria</taxon>
        <taxon>Bacillati</taxon>
        <taxon>Bacillota</taxon>
        <taxon>Bacilli</taxon>
        <taxon>Bacillales</taxon>
        <taxon>Staphylococcaceae</taxon>
        <taxon>Staphylococcus</taxon>
    </lineage>
</organism>
<name>TRUB_STAA8</name>
<protein>
    <recommendedName>
        <fullName evidence="1">tRNA pseudouridine synthase B</fullName>
        <ecNumber evidence="1">5.4.99.25</ecNumber>
    </recommendedName>
    <alternativeName>
        <fullName evidence="1">tRNA pseudouridine(55) synthase</fullName>
        <shortName evidence="1">Psi55 synthase</shortName>
    </alternativeName>
    <alternativeName>
        <fullName evidence="1">tRNA pseudouridylate synthase</fullName>
    </alternativeName>
    <alternativeName>
        <fullName evidence="1">tRNA-uridine isomerase</fullName>
    </alternativeName>
</protein>
<feature type="chain" id="PRO_1000084691" description="tRNA pseudouridine synthase B">
    <location>
        <begin position="1"/>
        <end position="305"/>
    </location>
</feature>
<feature type="active site" description="Nucleophile" evidence="1">
    <location>
        <position position="39"/>
    </location>
</feature>
<accession>Q2G2Q3</accession>